<accession>A7H642</accession>
<comment type="function">
    <text evidence="1">One of the primary rRNA binding proteins, it binds directly to 16S rRNA central domain where it helps coordinate assembly of the platform of the 30S subunit.</text>
</comment>
<comment type="subunit">
    <text evidence="1">Part of the 30S ribosomal subunit. Contacts proteins S5 and S12.</text>
</comment>
<comment type="similarity">
    <text evidence="1">Belongs to the universal ribosomal protein uS8 family.</text>
</comment>
<sequence>MINDIISDSLTRIRNAGMRKLETTKLLHSKAVEALVGIFQAKGYIESFNVIEEDKKKFINVVLKYDEKGKSVINNLKRISKPGRRVYKGKDEIKRFKNGYGTIVVSTSHGVLANDEAYKAGVGGEILCTIW</sequence>
<feature type="chain" id="PRO_1000051775" description="Small ribosomal subunit protein uS8">
    <location>
        <begin position="1"/>
        <end position="131"/>
    </location>
</feature>
<proteinExistence type="inferred from homology"/>
<name>RS8_CAMJD</name>
<dbReference type="EMBL" id="CP000768">
    <property type="protein sequence ID" value="ABS44507.1"/>
    <property type="molecule type" value="Genomic_DNA"/>
</dbReference>
<dbReference type="SMR" id="A7H642"/>
<dbReference type="KEGG" id="cjd:JJD26997_2067"/>
<dbReference type="HOGENOM" id="CLU_098428_0_2_7"/>
<dbReference type="Proteomes" id="UP000002302">
    <property type="component" value="Chromosome"/>
</dbReference>
<dbReference type="GO" id="GO:1990904">
    <property type="term" value="C:ribonucleoprotein complex"/>
    <property type="evidence" value="ECO:0007669"/>
    <property type="project" value="UniProtKB-KW"/>
</dbReference>
<dbReference type="GO" id="GO:0005840">
    <property type="term" value="C:ribosome"/>
    <property type="evidence" value="ECO:0007669"/>
    <property type="project" value="UniProtKB-KW"/>
</dbReference>
<dbReference type="GO" id="GO:0019843">
    <property type="term" value="F:rRNA binding"/>
    <property type="evidence" value="ECO:0007669"/>
    <property type="project" value="UniProtKB-UniRule"/>
</dbReference>
<dbReference type="GO" id="GO:0003735">
    <property type="term" value="F:structural constituent of ribosome"/>
    <property type="evidence" value="ECO:0007669"/>
    <property type="project" value="InterPro"/>
</dbReference>
<dbReference type="GO" id="GO:0006412">
    <property type="term" value="P:translation"/>
    <property type="evidence" value="ECO:0007669"/>
    <property type="project" value="UniProtKB-UniRule"/>
</dbReference>
<dbReference type="FunFam" id="3.30.1370.30:FF:000002">
    <property type="entry name" value="30S ribosomal protein S8"/>
    <property type="match status" value="1"/>
</dbReference>
<dbReference type="FunFam" id="3.30.1490.10:FF:000001">
    <property type="entry name" value="30S ribosomal protein S8"/>
    <property type="match status" value="1"/>
</dbReference>
<dbReference type="Gene3D" id="3.30.1370.30">
    <property type="match status" value="1"/>
</dbReference>
<dbReference type="Gene3D" id="3.30.1490.10">
    <property type="match status" value="1"/>
</dbReference>
<dbReference type="HAMAP" id="MF_01302_B">
    <property type="entry name" value="Ribosomal_uS8_B"/>
    <property type="match status" value="1"/>
</dbReference>
<dbReference type="InterPro" id="IPR000630">
    <property type="entry name" value="Ribosomal_uS8"/>
</dbReference>
<dbReference type="InterPro" id="IPR047863">
    <property type="entry name" value="Ribosomal_uS8_CS"/>
</dbReference>
<dbReference type="InterPro" id="IPR035987">
    <property type="entry name" value="Ribosomal_uS8_sf"/>
</dbReference>
<dbReference type="NCBIfam" id="NF001109">
    <property type="entry name" value="PRK00136.1"/>
    <property type="match status" value="1"/>
</dbReference>
<dbReference type="PANTHER" id="PTHR11758">
    <property type="entry name" value="40S RIBOSOMAL PROTEIN S15A"/>
    <property type="match status" value="1"/>
</dbReference>
<dbReference type="Pfam" id="PF00410">
    <property type="entry name" value="Ribosomal_S8"/>
    <property type="match status" value="1"/>
</dbReference>
<dbReference type="SUPFAM" id="SSF56047">
    <property type="entry name" value="Ribosomal protein S8"/>
    <property type="match status" value="1"/>
</dbReference>
<dbReference type="PROSITE" id="PS00053">
    <property type="entry name" value="RIBOSOMAL_S8"/>
    <property type="match status" value="1"/>
</dbReference>
<reference key="1">
    <citation type="submission" date="2007-07" db="EMBL/GenBank/DDBJ databases">
        <title>Complete genome sequence of Campylobacter jejuni subsp doylei 269.97 isolated from human blood.</title>
        <authorList>
            <person name="Fouts D.E."/>
            <person name="Mongodin E.F."/>
            <person name="Puiu D."/>
            <person name="Sebastian Y."/>
            <person name="Miller W.G."/>
            <person name="Mandrell R.E."/>
            <person name="Lastovica A.J."/>
            <person name="Nelson K.E."/>
        </authorList>
    </citation>
    <scope>NUCLEOTIDE SEQUENCE [LARGE SCALE GENOMIC DNA]</scope>
    <source>
        <strain>ATCC BAA-1458 / RM4099 / 269.97</strain>
    </source>
</reference>
<keyword id="KW-0687">Ribonucleoprotein</keyword>
<keyword id="KW-0689">Ribosomal protein</keyword>
<keyword id="KW-0694">RNA-binding</keyword>
<keyword id="KW-0699">rRNA-binding</keyword>
<organism>
    <name type="scientific">Campylobacter jejuni subsp. doylei (strain ATCC BAA-1458 / RM4099 / 269.97)</name>
    <dbReference type="NCBI Taxonomy" id="360109"/>
    <lineage>
        <taxon>Bacteria</taxon>
        <taxon>Pseudomonadati</taxon>
        <taxon>Campylobacterota</taxon>
        <taxon>Epsilonproteobacteria</taxon>
        <taxon>Campylobacterales</taxon>
        <taxon>Campylobacteraceae</taxon>
        <taxon>Campylobacter</taxon>
    </lineage>
</organism>
<protein>
    <recommendedName>
        <fullName evidence="1">Small ribosomal subunit protein uS8</fullName>
    </recommendedName>
    <alternativeName>
        <fullName evidence="2">30S ribosomal protein S8</fullName>
    </alternativeName>
</protein>
<gene>
    <name evidence="1" type="primary">rpsH</name>
    <name type="ordered locus">JJD26997_2067</name>
</gene>
<evidence type="ECO:0000255" key="1">
    <source>
        <dbReference type="HAMAP-Rule" id="MF_01302"/>
    </source>
</evidence>
<evidence type="ECO:0000305" key="2"/>